<accession>Q8H0D2</accession>
<accession>A0A096XS55</accession>
<accession>Q84PP8</accession>
<dbReference type="EC" id="2.1.1.160" evidence="6"/>
<dbReference type="EMBL" id="AB086415">
    <property type="protein sequence ID" value="BAC43761.1"/>
    <property type="molecule type" value="mRNA"/>
</dbReference>
<dbReference type="EMBL" id="AB084125">
    <property type="protein sequence ID" value="BAC75663.1"/>
    <property type="molecule type" value="mRNA"/>
</dbReference>
<dbReference type="EMBL" id="JX978510">
    <property type="protein sequence ID" value="AFV60438.1"/>
    <property type="molecule type" value="Genomic_DNA"/>
</dbReference>
<dbReference type="EMBL" id="KF678863">
    <property type="protein sequence ID" value="AIG53792.1"/>
    <property type="molecule type" value="mRNA"/>
</dbReference>
<dbReference type="SMR" id="Q8H0D2"/>
<dbReference type="KEGG" id="ag:BAC43761"/>
<dbReference type="KEGG" id="ag:BAC75663"/>
<dbReference type="BRENDA" id="2.1.1.160">
    <property type="organism ID" value="1559"/>
</dbReference>
<dbReference type="SABIO-RK" id="Q8H0D2"/>
<dbReference type="Proteomes" id="UP000515148">
    <property type="component" value="Unplaced"/>
</dbReference>
<dbReference type="GO" id="GO:0102741">
    <property type="term" value="F:caffeine synthase activity"/>
    <property type="evidence" value="ECO:0007669"/>
    <property type="project" value="UniProtKB-EC"/>
</dbReference>
<dbReference type="GO" id="GO:0046872">
    <property type="term" value="F:metal ion binding"/>
    <property type="evidence" value="ECO:0007669"/>
    <property type="project" value="UniProtKB-KW"/>
</dbReference>
<dbReference type="GO" id="GO:0009820">
    <property type="term" value="P:alkaloid metabolic process"/>
    <property type="evidence" value="ECO:0007669"/>
    <property type="project" value="UniProtKB-KW"/>
</dbReference>
<dbReference type="GO" id="GO:0032259">
    <property type="term" value="P:methylation"/>
    <property type="evidence" value="ECO:0007669"/>
    <property type="project" value="UniProtKB-KW"/>
</dbReference>
<dbReference type="Gene3D" id="1.10.1200.270">
    <property type="entry name" value="Methyltransferase, alpha-helical capping domain"/>
    <property type="match status" value="1"/>
</dbReference>
<dbReference type="Gene3D" id="3.40.50.150">
    <property type="entry name" value="Vaccinia Virus protein VP39"/>
    <property type="match status" value="1"/>
</dbReference>
<dbReference type="InterPro" id="IPR005299">
    <property type="entry name" value="MeTrfase_7"/>
</dbReference>
<dbReference type="InterPro" id="IPR042086">
    <property type="entry name" value="MeTrfase_capping"/>
</dbReference>
<dbReference type="InterPro" id="IPR029063">
    <property type="entry name" value="SAM-dependent_MTases_sf"/>
</dbReference>
<dbReference type="PANTHER" id="PTHR31009">
    <property type="entry name" value="S-ADENOSYL-L-METHIONINE:CARBOXYL METHYLTRANSFERASE FAMILY PROTEIN"/>
    <property type="match status" value="1"/>
</dbReference>
<dbReference type="Pfam" id="PF03492">
    <property type="entry name" value="Methyltransf_7"/>
    <property type="match status" value="1"/>
</dbReference>
<dbReference type="SUPFAM" id="SSF53335">
    <property type="entry name" value="S-adenosyl-L-methionine-dependent methyltransferases"/>
    <property type="match status" value="1"/>
</dbReference>
<evidence type="ECO:0000250" key="1">
    <source>
        <dbReference type="UniProtKB" id="A4GE69"/>
    </source>
</evidence>
<evidence type="ECO:0000250" key="2">
    <source>
        <dbReference type="UniProtKB" id="A4GE70"/>
    </source>
</evidence>
<evidence type="ECO:0000250" key="3">
    <source>
        <dbReference type="UniProtKB" id="Q9FLN8"/>
    </source>
</evidence>
<evidence type="ECO:0000250" key="4">
    <source>
        <dbReference type="UniProtKB" id="Q9FZN8"/>
    </source>
</evidence>
<evidence type="ECO:0000269" key="5">
    <source>
    </source>
</evidence>
<evidence type="ECO:0000269" key="6">
    <source>
    </source>
</evidence>
<evidence type="ECO:0000269" key="7">
    <source>
    </source>
</evidence>
<evidence type="ECO:0000303" key="8">
    <source>
    </source>
</evidence>
<evidence type="ECO:0000303" key="9">
    <source>
    </source>
</evidence>
<evidence type="ECO:0000303" key="10">
    <source>
    </source>
</evidence>
<evidence type="ECO:0000305" key="11"/>
<protein>
    <recommendedName>
        <fullName evidence="10">3,7-dimethylxanthine N-methyltransferase 1</fullName>
        <shortName evidence="10">CaDXMT1</shortName>
        <ecNumber evidence="6">2.1.1.160</ecNumber>
    </recommendedName>
    <alternativeName>
        <fullName evidence="8">Caffeine synthase 7</fullName>
        <shortName evidence="8">CtCS7</shortName>
    </alternativeName>
</protein>
<gene>
    <name evidence="10" type="primary">DXMT1</name>
    <name evidence="8" type="synonym">CS7</name>
</gene>
<proteinExistence type="evidence at protein level"/>
<reference key="1">
    <citation type="journal article" date="2003" name="FEBS Lett.">
        <title>Isolation of a new dual-functional caffeine synthase gene encoding an enzyme for the conversion of 7-methylxanthine to caffeine from coffee (Coffea arabica L.).</title>
        <authorList>
            <person name="Mizuno K."/>
            <person name="Okuda A."/>
            <person name="Kato M."/>
            <person name="Yoneyama N."/>
            <person name="Tanaka H."/>
            <person name="Ashihara H."/>
            <person name="Fujimura T."/>
        </authorList>
    </citation>
    <scope>NUCLEOTIDE SEQUENCE [MRNA]</scope>
    <scope>FUNCTION</scope>
    <scope>TISSUE SPECIFICITY</scope>
</reference>
<reference key="2">
    <citation type="journal article" date="2003" name="Plant Physiol.">
        <title>Molecular cloning and functional characterization of three distinct N-methyltransferases involved in the caffeine biosynthetic pathway in coffee plants.</title>
        <authorList>
            <person name="Uefuji H."/>
            <person name="Ogita S."/>
            <person name="Yamaguchi Y."/>
            <person name="Koizumi N."/>
            <person name="Sano H."/>
        </authorList>
    </citation>
    <scope>NUCLEOTIDE SEQUENCE [MRNA]</scope>
    <scope>FUNCTION</scope>
    <scope>CATALYTIC ACTIVITY</scope>
    <scope>BIOPHYSICOCHEMICAL PROPERTIES</scope>
    <scope>TISSUE SPECIFICITY</scope>
    <scope>PATHWAY</scope>
    <source>
        <tissue>Fruit</tissue>
    </source>
</reference>
<reference key="3">
    <citation type="journal article" date="2015" name="Planta">
        <title>Differential regulation of caffeine metabolism in Coffea arabica (Arabica) and Coffea canephora (Robusta).</title>
        <authorList>
            <person name="Perrois C."/>
            <person name="Strickler S.R."/>
            <person name="Mathieu G."/>
            <person name="Lepelley M."/>
            <person name="Bedon L."/>
            <person name="Michaux S."/>
            <person name="Husson J."/>
            <person name="Mueller L."/>
            <person name="Privat I."/>
        </authorList>
    </citation>
    <scope>NUCLEOTIDE SEQUENCE [GENOMIC DNA / MRNA]</scope>
    <scope>GENE FAMILY</scope>
    <scope>NOMENCLATURE</scope>
    <source>
        <strain>cv. ET39</strain>
    </source>
</reference>
<reference key="4">
    <citation type="journal article" date="2008" name="Phytochemistry">
        <title>Caffeine and related purine alkaloids: biosynthesis, catabolism, function and genetic engineering.</title>
        <authorList>
            <person name="Ashihara H."/>
            <person name="Sano H."/>
            <person name="Crozier A."/>
        </authorList>
    </citation>
    <scope>FUNCTION</scope>
    <scope>REVIEW ON CAFFEINE BIOSYNTHESIS</scope>
    <scope>BIOTECHNOLOGY</scope>
</reference>
<keyword id="KW-0017">Alkaloid metabolism</keyword>
<keyword id="KW-0460">Magnesium</keyword>
<keyword id="KW-0479">Metal-binding</keyword>
<keyword id="KW-0489">Methyltransferase</keyword>
<keyword id="KW-1185">Reference proteome</keyword>
<keyword id="KW-0949">S-adenosyl-L-methionine</keyword>
<keyword id="KW-0808">Transferase</keyword>
<feature type="chain" id="PRO_0000408306" description="3,7-dimethylxanthine N-methyltransferase 1">
    <location>
        <begin position="1"/>
        <end position="384"/>
    </location>
</feature>
<feature type="binding site" evidence="2">
    <location>
        <position position="18"/>
    </location>
    <ligand>
        <name>S-adenosyl-L-homocysteine</name>
        <dbReference type="ChEBI" id="CHEBI:57856"/>
    </ligand>
</feature>
<feature type="binding site" evidence="2">
    <location>
        <position position="61"/>
    </location>
    <ligand>
        <name>S-adenosyl-L-homocysteine</name>
        <dbReference type="ChEBI" id="CHEBI:57856"/>
    </ligand>
</feature>
<feature type="binding site" evidence="2">
    <location>
        <position position="66"/>
    </location>
    <ligand>
        <name>S-adenosyl-L-homocysteine</name>
        <dbReference type="ChEBI" id="CHEBI:57856"/>
    </ligand>
</feature>
<feature type="binding site" evidence="2">
    <location>
        <position position="100"/>
    </location>
    <ligand>
        <name>S-adenosyl-L-homocysteine</name>
        <dbReference type="ChEBI" id="CHEBI:57856"/>
    </ligand>
</feature>
<feature type="binding site" evidence="2">
    <location>
        <position position="101"/>
    </location>
    <ligand>
        <name>S-adenosyl-L-homocysteine</name>
        <dbReference type="ChEBI" id="CHEBI:57856"/>
    </ligand>
</feature>
<feature type="binding site" evidence="2">
    <location>
        <position position="139"/>
    </location>
    <ligand>
        <name>S-adenosyl-L-homocysteine</name>
        <dbReference type="ChEBI" id="CHEBI:57856"/>
    </ligand>
</feature>
<feature type="binding site" evidence="2">
    <location>
        <position position="140"/>
    </location>
    <ligand>
        <name>S-adenosyl-L-homocysteine</name>
        <dbReference type="ChEBI" id="CHEBI:57856"/>
    </ligand>
</feature>
<feature type="binding site" evidence="1">
    <location>
        <position position="156"/>
    </location>
    <ligand>
        <name>S-adenosyl-L-homocysteine</name>
        <dbReference type="ChEBI" id="CHEBI:57856"/>
    </ligand>
</feature>
<feature type="binding site" evidence="2">
    <location>
        <position position="157"/>
    </location>
    <ligand>
        <name>theobromine</name>
        <dbReference type="ChEBI" id="CHEBI:28946"/>
    </ligand>
</feature>
<feature type="binding site" evidence="2">
    <location>
        <position position="158"/>
    </location>
    <ligand>
        <name>S-adenosyl-L-homocysteine</name>
        <dbReference type="ChEBI" id="CHEBI:57856"/>
    </ligand>
</feature>
<feature type="binding site" evidence="2">
    <location>
        <position position="160"/>
    </location>
    <ligand>
        <name>theobromine</name>
        <dbReference type="ChEBI" id="CHEBI:28946"/>
    </ligand>
</feature>
<feature type="binding site" evidence="2">
    <location>
        <position position="161"/>
    </location>
    <ligand>
        <name>theobromine</name>
        <dbReference type="ChEBI" id="CHEBI:28946"/>
    </ligand>
</feature>
<feature type="binding site" evidence="3">
    <location>
        <position position="178"/>
    </location>
    <ligand>
        <name>Mg(2+)</name>
        <dbReference type="ChEBI" id="CHEBI:18420"/>
    </ligand>
</feature>
<feature type="binding site" evidence="2">
    <location>
        <position position="237"/>
    </location>
    <ligand>
        <name>theobromine</name>
        <dbReference type="ChEBI" id="CHEBI:28946"/>
    </ligand>
</feature>
<feature type="binding site" evidence="3">
    <location>
        <position position="260"/>
    </location>
    <ligand>
        <name>Mg(2+)</name>
        <dbReference type="ChEBI" id="CHEBI:18420"/>
    </ligand>
</feature>
<feature type="binding site" evidence="3">
    <location>
        <position position="262"/>
    </location>
    <ligand>
        <name>Mg(2+)</name>
        <dbReference type="ChEBI" id="CHEBI:18420"/>
    </ligand>
</feature>
<feature type="binding site" evidence="3">
    <location>
        <position position="263"/>
    </location>
    <ligand>
        <name>Mg(2+)</name>
        <dbReference type="ChEBI" id="CHEBI:18420"/>
    </ligand>
</feature>
<feature type="binding site" evidence="2">
    <location>
        <position position="368"/>
    </location>
    <ligand>
        <name>theobromine</name>
        <dbReference type="ChEBI" id="CHEBI:28946"/>
    </ligand>
</feature>
<feature type="site" description="Involved in substrate discrimination" evidence="4">
    <location>
        <position position="154"/>
    </location>
</feature>
<feature type="site" description="Involved in substrate discrimination" evidence="4">
    <location>
        <position position="266"/>
    </location>
</feature>
<feature type="site" description="Involved in substrate discrimination" evidence="4">
    <location>
        <position position="328"/>
    </location>
</feature>
<feature type="site" description="Involved in substrate discrimination" evidence="4">
    <location>
        <position position="343"/>
    </location>
</feature>
<feature type="sequence conflict" description="In Ref. 2; BAC75663 and 3; AFV60438/AIG53792." evidence="11" ref="2 3">
    <original>C</original>
    <variation>R</variation>
    <location>
        <position position="126"/>
    </location>
</feature>
<feature type="sequence conflict" description="In Ref. 2; BAC75663 and 3; AFV60438/AIG53792." evidence="11" ref="2 3">
    <original>L</original>
    <variation>M</variation>
    <location>
        <position position="346"/>
    </location>
</feature>
<feature type="sequence conflict" description="In Ref. 2; BAC75663 and 3; AFV60438/AIG53792." evidence="11" ref="2 3">
    <original>V</original>
    <variation>L</variation>
    <location>
        <position position="371"/>
    </location>
</feature>
<feature type="sequence conflict" description="In Ref. 2; BAC75663 and 3; AFV60438/AIG53792." evidence="11" ref="2 3">
    <original>ADM</original>
    <variation>SDV</variation>
    <location>
        <begin position="382"/>
        <end position="384"/>
    </location>
</feature>
<sequence>MELQEVLHMNGGEGDTSYAKNSFYNLFLIRVKPILEQCIQELLRANLPNINKCIKVADLGCASGPNTLLTVRDIVQSIDKVGQEKKNELERPTIQIFLNDLFQNDFNSVFKSLPSFYRKLEKENGCKIGSCLIGAMPGSFYGRLFPEESMHFLHSCYCLHWLSQVPSGLVTELGISANKGCIYSSKASRPPIQKAYLDQFTKDFTTFLRIHSEELISRGRMLLTWICKEDEFENPNSIDLLEMSINDLVIEGHLEEEKLDSFNVPIYAPSTEEVKCIVEEEGSFEILYLETFKVPYDAGFSIDDDYQGRSHSPVSCDEHARAAHVASVVRSIFEPIVASHFGEAILPDLSHRIAKNAAKVLRSGKGFYDSVIISLAKKPEKADM</sequence>
<organism>
    <name type="scientific">Coffea arabica</name>
    <name type="common">Arabian coffee</name>
    <dbReference type="NCBI Taxonomy" id="13443"/>
    <lineage>
        <taxon>Eukaryota</taxon>
        <taxon>Viridiplantae</taxon>
        <taxon>Streptophyta</taxon>
        <taxon>Embryophyta</taxon>
        <taxon>Tracheophyta</taxon>
        <taxon>Spermatophyta</taxon>
        <taxon>Magnoliopsida</taxon>
        <taxon>eudicotyledons</taxon>
        <taxon>Gunneridae</taxon>
        <taxon>Pentapetalae</taxon>
        <taxon>asterids</taxon>
        <taxon>lamiids</taxon>
        <taxon>Gentianales</taxon>
        <taxon>Rubiaceae</taxon>
        <taxon>Ixoroideae</taxon>
        <taxon>Gardenieae complex</taxon>
        <taxon>Bertiereae - Coffeeae clade</taxon>
        <taxon>Coffeeae</taxon>
        <taxon>Coffea</taxon>
    </lineage>
</organism>
<name>DXMT1_COFAR</name>
<comment type="function">
    <text evidence="5 6 9">Involved in the biosynthesis of caffeine. Catalyzes the conversion of 7-methylxanthine to caffeine, likely via theobromine as an intermediate.</text>
</comment>
<comment type="catalytic activity">
    <reaction evidence="6">
        <text>theobromine + S-adenosyl-L-methionine = caffeine + S-adenosyl-L-homocysteine + H(+)</text>
        <dbReference type="Rhea" id="RHEA:20944"/>
        <dbReference type="ChEBI" id="CHEBI:15378"/>
        <dbReference type="ChEBI" id="CHEBI:27732"/>
        <dbReference type="ChEBI" id="CHEBI:28946"/>
        <dbReference type="ChEBI" id="CHEBI:57856"/>
        <dbReference type="ChEBI" id="CHEBI:59789"/>
        <dbReference type="EC" id="2.1.1.160"/>
    </reaction>
    <physiologicalReaction direction="left-to-right" evidence="6">
        <dbReference type="Rhea" id="RHEA:20945"/>
    </physiologicalReaction>
</comment>
<comment type="catalytic activity">
    <reaction evidence="6">
        <text>1,7-dimethylxanthine + S-adenosyl-L-methionine = caffeine + S-adenosyl-L-homocysteine + H(+)</text>
        <dbReference type="Rhea" id="RHEA:10280"/>
        <dbReference type="ChEBI" id="CHEBI:15378"/>
        <dbReference type="ChEBI" id="CHEBI:25858"/>
        <dbReference type="ChEBI" id="CHEBI:27732"/>
        <dbReference type="ChEBI" id="CHEBI:57856"/>
        <dbReference type="ChEBI" id="CHEBI:59789"/>
        <dbReference type="EC" id="2.1.1.160"/>
    </reaction>
    <physiologicalReaction direction="left-to-right" evidence="6">
        <dbReference type="Rhea" id="RHEA:10281"/>
    </physiologicalReaction>
</comment>
<comment type="catalytic activity">
    <reaction evidence="6">
        <text>7-methylxanthine + S-adenosyl-L-methionine = theobromine + S-adenosyl-L-homocysteine + H(+)</text>
        <dbReference type="Rhea" id="RHEA:24604"/>
        <dbReference type="ChEBI" id="CHEBI:15378"/>
        <dbReference type="ChEBI" id="CHEBI:28946"/>
        <dbReference type="ChEBI" id="CHEBI:48991"/>
        <dbReference type="ChEBI" id="CHEBI:57856"/>
        <dbReference type="ChEBI" id="CHEBI:59789"/>
        <dbReference type="EC" id="2.1.1.160"/>
    </reaction>
    <physiologicalReaction direction="left-to-right" evidence="6">
        <dbReference type="Rhea" id="RHEA:24605"/>
    </physiologicalReaction>
</comment>
<comment type="cofactor">
    <cofactor evidence="3">
        <name>Mg(2+)</name>
        <dbReference type="ChEBI" id="CHEBI:18420"/>
    </cofactor>
    <text evidence="3">Binds 1 Mg(2+) ion per subunit.</text>
</comment>
<comment type="biophysicochemical properties">
    <kinetics>
        <KM evidence="6">916 uM for 7-methylxanthine</KM>
        <KM evidence="6">973 uM for paraxanthine</KM>
        <KM evidence="6">1222 uM for theobromine</KM>
        <KM evidence="6">153 uM for S-adenosyl-L-methionine</KM>
    </kinetics>
</comment>
<comment type="pathway">
    <text evidence="6">Alkaloid biosynthesis.</text>
</comment>
<comment type="tissue specificity">
    <text evidence="5 6">Highly expressed in developing endosperm and immature fruits (grains). Detected in young leaves and flower buds, but not in mature fruits.</text>
</comment>
<comment type="biotechnology">
    <text evidence="7">Tobacco plants (Nicotiana tabacum cv. Xanthi) expressing CaXMT1, CaMXMT1 and CaDXMT1 accumulate caffeine and become less appetant and toxic for caterpillars cutworms (Spodoptera litura). Caffeine also stimulates endogenous defense mechanisms against other pathogens (e.g. tobacco mosaic virus and Pseudomonas syringae) by triggering the expression of defense-related genes.</text>
</comment>
<comment type="similarity">
    <text evidence="11">Belongs to the methyltransferase superfamily. Type-7 methyltransferase family.</text>
</comment>